<gene>
    <name evidence="1" type="primary">mutL</name>
    <name type="ordered locus">Swit_0491</name>
</gene>
<organism>
    <name type="scientific">Rhizorhabdus wittichii (strain DSM 6014 / CCUG 31198 / JCM 15750 / NBRC 105917 / EY 4224 / RW1)</name>
    <name type="common">Sphingomonas wittichii</name>
    <dbReference type="NCBI Taxonomy" id="392499"/>
    <lineage>
        <taxon>Bacteria</taxon>
        <taxon>Pseudomonadati</taxon>
        <taxon>Pseudomonadota</taxon>
        <taxon>Alphaproteobacteria</taxon>
        <taxon>Sphingomonadales</taxon>
        <taxon>Sphingomonadaceae</taxon>
        <taxon>Rhizorhabdus</taxon>
    </lineage>
</organism>
<keyword id="KW-0227">DNA damage</keyword>
<keyword id="KW-0234">DNA repair</keyword>
<keyword id="KW-1185">Reference proteome</keyword>
<reference key="1">
    <citation type="journal article" date="2010" name="J. Bacteriol.">
        <title>Genome sequence of the dioxin-mineralizing bacterium Sphingomonas wittichii RW1.</title>
        <authorList>
            <person name="Miller T.R."/>
            <person name="Delcher A.L."/>
            <person name="Salzberg S.L."/>
            <person name="Saunders E."/>
            <person name="Detter J.C."/>
            <person name="Halden R.U."/>
        </authorList>
    </citation>
    <scope>NUCLEOTIDE SEQUENCE [LARGE SCALE GENOMIC DNA]</scope>
    <source>
        <strain>DSM 6014 / CCUG 31198 / JCM 15750 / NBRC 105917 / EY 4224 / RW1</strain>
    </source>
</reference>
<protein>
    <recommendedName>
        <fullName evidence="1">DNA mismatch repair protein MutL</fullName>
    </recommendedName>
</protein>
<name>MUTL_RHIWR</name>
<sequence>MSIRRLPEHLVNRIAAGEVVERPASALKELVENSIDAGARRISVSLSEGGLSAIDVADDGCGMTPDEIALALERHATSKLPDDAIEAVTTLGFRGEALPSIGSVADLTIESRVRGADGWHRRVDHGELVGEGPAALPPGTRIRVSNLFAKVPARRKFLRSARAEYAACVDVIKRLAMARPDIGFTLEHEGRRAILVAPDEQRVDRVAALTDRDLAQNSVAVDFRREAVSLTGVAGLPTFNRGVADHQFLFVNGRPVKDRLLIGAVRGAYQDMLARDRHPVIALFVELPGDQVDVNVHPAKTEVRFRDPGLVRGMIVGGLRAALDEAGHRSVQRPSVAALGNWQAGGLPTASSTAPAIPNGFAFGAAAERSGQGSVWDRVADFAPAPMARAEPAYSPPPQQASYPMGVARGQVAATYIVAEAEDGLVIVDQHAAHERLVLERMRRAMADGGVARQALLLPEVVELDEVGCDRLETRIAELAEMGLELERFGPKAMLVRATPALLGQGDVHGLIVDLADELAAYDEALSLKERLDHVAATMACHGSVRAGRTLSVAEMNALLREMEVTPHSGQCNHGRPTWIKLGHGDIEKLFGRK</sequence>
<feature type="chain" id="PRO_1000010083" description="DNA mismatch repair protein MutL">
    <location>
        <begin position="1"/>
        <end position="594"/>
    </location>
</feature>
<dbReference type="EMBL" id="CP000699">
    <property type="protein sequence ID" value="ABQ66859.1"/>
    <property type="molecule type" value="Genomic_DNA"/>
</dbReference>
<dbReference type="SMR" id="A5V3J3"/>
<dbReference type="STRING" id="392499.Swit_0491"/>
<dbReference type="PaxDb" id="392499-Swit_0491"/>
<dbReference type="KEGG" id="swi:Swit_0491"/>
<dbReference type="eggNOG" id="COG0323">
    <property type="taxonomic scope" value="Bacteria"/>
</dbReference>
<dbReference type="HOGENOM" id="CLU_004131_4_2_5"/>
<dbReference type="OrthoDB" id="9763467at2"/>
<dbReference type="Proteomes" id="UP000001989">
    <property type="component" value="Chromosome"/>
</dbReference>
<dbReference type="GO" id="GO:0032300">
    <property type="term" value="C:mismatch repair complex"/>
    <property type="evidence" value="ECO:0007669"/>
    <property type="project" value="InterPro"/>
</dbReference>
<dbReference type="GO" id="GO:0005524">
    <property type="term" value="F:ATP binding"/>
    <property type="evidence" value="ECO:0007669"/>
    <property type="project" value="InterPro"/>
</dbReference>
<dbReference type="GO" id="GO:0016887">
    <property type="term" value="F:ATP hydrolysis activity"/>
    <property type="evidence" value="ECO:0007669"/>
    <property type="project" value="InterPro"/>
</dbReference>
<dbReference type="GO" id="GO:0140664">
    <property type="term" value="F:ATP-dependent DNA damage sensor activity"/>
    <property type="evidence" value="ECO:0007669"/>
    <property type="project" value="InterPro"/>
</dbReference>
<dbReference type="GO" id="GO:0030983">
    <property type="term" value="F:mismatched DNA binding"/>
    <property type="evidence" value="ECO:0007669"/>
    <property type="project" value="InterPro"/>
</dbReference>
<dbReference type="GO" id="GO:0006298">
    <property type="term" value="P:mismatch repair"/>
    <property type="evidence" value="ECO:0007669"/>
    <property type="project" value="UniProtKB-UniRule"/>
</dbReference>
<dbReference type="CDD" id="cd16926">
    <property type="entry name" value="HATPase_MutL-MLH-PMS-like"/>
    <property type="match status" value="1"/>
</dbReference>
<dbReference type="CDD" id="cd00782">
    <property type="entry name" value="MutL_Trans"/>
    <property type="match status" value="1"/>
</dbReference>
<dbReference type="FunFam" id="3.30.565.10:FF:000003">
    <property type="entry name" value="DNA mismatch repair endonuclease MutL"/>
    <property type="match status" value="1"/>
</dbReference>
<dbReference type="Gene3D" id="3.30.230.10">
    <property type="match status" value="1"/>
</dbReference>
<dbReference type="Gene3D" id="3.30.565.10">
    <property type="entry name" value="Histidine kinase-like ATPase, C-terminal domain"/>
    <property type="match status" value="1"/>
</dbReference>
<dbReference type="Gene3D" id="3.30.1540.20">
    <property type="entry name" value="MutL, C-terminal domain, dimerisation subdomain"/>
    <property type="match status" value="1"/>
</dbReference>
<dbReference type="Gene3D" id="3.30.1370.100">
    <property type="entry name" value="MutL, C-terminal domain, regulatory subdomain"/>
    <property type="match status" value="1"/>
</dbReference>
<dbReference type="HAMAP" id="MF_00149">
    <property type="entry name" value="DNA_mis_repair"/>
    <property type="match status" value="1"/>
</dbReference>
<dbReference type="InterPro" id="IPR014762">
    <property type="entry name" value="DNA_mismatch_repair_CS"/>
</dbReference>
<dbReference type="InterPro" id="IPR020667">
    <property type="entry name" value="DNA_mismatch_repair_MutL"/>
</dbReference>
<dbReference type="InterPro" id="IPR013507">
    <property type="entry name" value="DNA_mismatch_S5_2-like"/>
</dbReference>
<dbReference type="InterPro" id="IPR036890">
    <property type="entry name" value="HATPase_C_sf"/>
</dbReference>
<dbReference type="InterPro" id="IPR002099">
    <property type="entry name" value="MutL/Mlh/PMS"/>
</dbReference>
<dbReference type="InterPro" id="IPR038973">
    <property type="entry name" value="MutL/Mlh/Pms-like"/>
</dbReference>
<dbReference type="InterPro" id="IPR014790">
    <property type="entry name" value="MutL_C"/>
</dbReference>
<dbReference type="InterPro" id="IPR042120">
    <property type="entry name" value="MutL_C_dimsub"/>
</dbReference>
<dbReference type="InterPro" id="IPR042121">
    <property type="entry name" value="MutL_C_regsub"/>
</dbReference>
<dbReference type="InterPro" id="IPR037198">
    <property type="entry name" value="MutL_C_sf"/>
</dbReference>
<dbReference type="InterPro" id="IPR020568">
    <property type="entry name" value="Ribosomal_Su5_D2-typ_SF"/>
</dbReference>
<dbReference type="InterPro" id="IPR014721">
    <property type="entry name" value="Ribsml_uS5_D2-typ_fold_subgr"/>
</dbReference>
<dbReference type="NCBIfam" id="TIGR00585">
    <property type="entry name" value="mutl"/>
    <property type="match status" value="1"/>
</dbReference>
<dbReference type="NCBIfam" id="NF000953">
    <property type="entry name" value="PRK00095.2-4"/>
    <property type="match status" value="1"/>
</dbReference>
<dbReference type="PANTHER" id="PTHR10073">
    <property type="entry name" value="DNA MISMATCH REPAIR PROTEIN MLH, PMS, MUTL"/>
    <property type="match status" value="1"/>
</dbReference>
<dbReference type="PANTHER" id="PTHR10073:SF12">
    <property type="entry name" value="DNA MISMATCH REPAIR PROTEIN MLH1"/>
    <property type="match status" value="1"/>
</dbReference>
<dbReference type="Pfam" id="PF01119">
    <property type="entry name" value="DNA_mis_repair"/>
    <property type="match status" value="1"/>
</dbReference>
<dbReference type="Pfam" id="PF13589">
    <property type="entry name" value="HATPase_c_3"/>
    <property type="match status" value="1"/>
</dbReference>
<dbReference type="Pfam" id="PF08676">
    <property type="entry name" value="MutL_C"/>
    <property type="match status" value="1"/>
</dbReference>
<dbReference type="SMART" id="SM01340">
    <property type="entry name" value="DNA_mis_repair"/>
    <property type="match status" value="1"/>
</dbReference>
<dbReference type="SMART" id="SM00853">
    <property type="entry name" value="MutL_C"/>
    <property type="match status" value="1"/>
</dbReference>
<dbReference type="SUPFAM" id="SSF55874">
    <property type="entry name" value="ATPase domain of HSP90 chaperone/DNA topoisomerase II/histidine kinase"/>
    <property type="match status" value="1"/>
</dbReference>
<dbReference type="SUPFAM" id="SSF118116">
    <property type="entry name" value="DNA mismatch repair protein MutL"/>
    <property type="match status" value="1"/>
</dbReference>
<dbReference type="SUPFAM" id="SSF54211">
    <property type="entry name" value="Ribosomal protein S5 domain 2-like"/>
    <property type="match status" value="1"/>
</dbReference>
<dbReference type="PROSITE" id="PS00058">
    <property type="entry name" value="DNA_MISMATCH_REPAIR_1"/>
    <property type="match status" value="1"/>
</dbReference>
<comment type="function">
    <text evidence="1">This protein is involved in the repair of mismatches in DNA. It is required for dam-dependent methyl-directed DNA mismatch repair. May act as a 'molecular matchmaker', a protein that promotes the formation of a stable complex between two or more DNA-binding proteins in an ATP-dependent manner without itself being part of a final effector complex.</text>
</comment>
<comment type="similarity">
    <text evidence="1">Belongs to the DNA mismatch repair MutL/HexB family.</text>
</comment>
<evidence type="ECO:0000255" key="1">
    <source>
        <dbReference type="HAMAP-Rule" id="MF_00149"/>
    </source>
</evidence>
<proteinExistence type="inferred from homology"/>
<accession>A5V3J3</accession>